<organism>
    <name type="scientific">Alcelaphine herpesvirus 1 (strain C500)</name>
    <name type="common">AlHV-1</name>
    <name type="synonym">Malignant catarrhal fever virus</name>
    <dbReference type="NCBI Taxonomy" id="654901"/>
    <lineage>
        <taxon>Viruses</taxon>
        <taxon>Duplodnaviria</taxon>
        <taxon>Heunggongvirae</taxon>
        <taxon>Peploviricota</taxon>
        <taxon>Herviviricetes</taxon>
        <taxon>Herpesvirales</taxon>
        <taxon>Orthoherpesviridae</taxon>
        <taxon>Gammaherpesvirinae</taxon>
        <taxon>Macavirus</taxon>
        <taxon>Macavirus alcelaphinegamma1</taxon>
    </lineage>
</organism>
<name>UL24_ALHV1</name>
<proteinExistence type="inferred from homology"/>
<evidence type="ECO:0000256" key="1">
    <source>
        <dbReference type="SAM" id="MobiDB-lite"/>
    </source>
</evidence>
<evidence type="ECO:0000305" key="2"/>
<accession>O36370</accession>
<gene>
    <name type="primary">20</name>
</gene>
<sequence length="250" mass="28195">MFPLLGQSACAALNSLPAKRKKAGLQAHRKVYKQLLQYHSFTKINKFLELKHPDPKKVKYRLFFEVSLGPRIVDVIVLTSYETERVCYVVELKTCLGSEFNFTSVRAAQRTQGLCQLYDSTKYLSNNAPLGGERWEVRAHLLFKSQSAMKTLYVEHPGFQFNQLQCTTGALSVFLKSREDVACRQLLYQGLQCAALAKKMRVLGTKSTKRARDKPTQVSRVPAQRSPVQKARGRKQAESHKKGASKGRAG</sequence>
<protein>
    <recommendedName>
        <fullName>Protein UL24 homolog</fullName>
    </recommendedName>
</protein>
<dbReference type="EMBL" id="AF005370">
    <property type="protein sequence ID" value="AAC58067.1"/>
    <property type="molecule type" value="Genomic_DNA"/>
</dbReference>
<dbReference type="PIR" id="T03115">
    <property type="entry name" value="T03115"/>
</dbReference>
<dbReference type="RefSeq" id="NP_065519.1">
    <property type="nucleotide sequence ID" value="NC_002531.1"/>
</dbReference>
<dbReference type="KEGG" id="vg:911755"/>
<dbReference type="Proteomes" id="UP000000941">
    <property type="component" value="Segment"/>
</dbReference>
<dbReference type="InterPro" id="IPR002580">
    <property type="entry name" value="Herpes_UL24"/>
</dbReference>
<dbReference type="Pfam" id="PF01646">
    <property type="entry name" value="Herpes_UL24"/>
    <property type="match status" value="1"/>
</dbReference>
<keyword id="KW-1185">Reference proteome</keyword>
<comment type="similarity">
    <text evidence="2">Belongs to the herpesviridae UL24 family.</text>
</comment>
<feature type="chain" id="PRO_0000405764" description="Protein UL24 homolog">
    <location>
        <begin position="1"/>
        <end position="250"/>
    </location>
</feature>
<feature type="region of interest" description="Disordered" evidence="1">
    <location>
        <begin position="205"/>
        <end position="250"/>
    </location>
</feature>
<reference key="1">
    <citation type="journal article" date="1997" name="J. Virol.">
        <title>Primary structure of the alcelaphine herpesvirus 1 genome.</title>
        <authorList>
            <person name="Ensser A."/>
            <person name="Pflanz R."/>
            <person name="Fleckenstein B."/>
        </authorList>
    </citation>
    <scope>NUCLEOTIDE SEQUENCE [LARGE SCALE GENOMIC DNA]</scope>
</reference>
<organismHost>
    <name type="scientific">Connochaetes taurinus</name>
    <name type="common">Blue wildebeest</name>
    <dbReference type="NCBI Taxonomy" id="9927"/>
</organismHost>